<feature type="chain" id="PRO_1000142265" description="Large ribosomal subunit protein uL22">
    <location>
        <begin position="1"/>
        <end position="112"/>
    </location>
</feature>
<sequence length="112" mass="12633">MQAKAIAKYVRISPLKVNFICKEIRGKQVDEALAILKFTPKKGARILEKVLNSAIANAEHNFGLNREDLFVSQAYANNAPVMKRWRPKAKGMAYPILKRSSHVGVVVEEREL</sequence>
<comment type="function">
    <text evidence="1">This protein binds specifically to 23S rRNA; its binding is stimulated by other ribosomal proteins, e.g. L4, L17, and L20. It is important during the early stages of 50S assembly. It makes multiple contacts with different domains of the 23S rRNA in the assembled 50S subunit and ribosome (By similarity).</text>
</comment>
<comment type="function">
    <text evidence="1">The globular domain of the protein is located near the polypeptide exit tunnel on the outside of the subunit, while an extended beta-hairpin is found that lines the wall of the exit tunnel in the center of the 70S ribosome.</text>
</comment>
<comment type="subunit">
    <text evidence="1">Part of the 50S ribosomal subunit.</text>
</comment>
<comment type="similarity">
    <text evidence="1">Belongs to the universal ribosomal protein uL22 family.</text>
</comment>
<gene>
    <name evidence="1" type="primary">rplV</name>
    <name type="ordered locus">FMG_0160</name>
</gene>
<evidence type="ECO:0000255" key="1">
    <source>
        <dbReference type="HAMAP-Rule" id="MF_01331"/>
    </source>
</evidence>
<evidence type="ECO:0000305" key="2"/>
<protein>
    <recommendedName>
        <fullName evidence="1">Large ribosomal subunit protein uL22</fullName>
    </recommendedName>
    <alternativeName>
        <fullName evidence="2">50S ribosomal protein L22</fullName>
    </alternativeName>
</protein>
<proteinExistence type="inferred from homology"/>
<keyword id="KW-1185">Reference proteome</keyword>
<keyword id="KW-0687">Ribonucleoprotein</keyword>
<keyword id="KW-0689">Ribosomal protein</keyword>
<keyword id="KW-0694">RNA-binding</keyword>
<keyword id="KW-0699">rRNA-binding</keyword>
<name>RL22_FINM2</name>
<dbReference type="EMBL" id="AP008971">
    <property type="protein sequence ID" value="BAG07578.1"/>
    <property type="molecule type" value="Genomic_DNA"/>
</dbReference>
<dbReference type="RefSeq" id="WP_002836114.1">
    <property type="nucleotide sequence ID" value="NC_010376.1"/>
</dbReference>
<dbReference type="SMR" id="B0RZU5"/>
<dbReference type="STRING" id="334413.FMG_0160"/>
<dbReference type="GeneID" id="60839395"/>
<dbReference type="KEGG" id="fma:FMG_0160"/>
<dbReference type="eggNOG" id="COG0091">
    <property type="taxonomic scope" value="Bacteria"/>
</dbReference>
<dbReference type="HOGENOM" id="CLU_083987_3_3_9"/>
<dbReference type="Proteomes" id="UP000001319">
    <property type="component" value="Chromosome"/>
</dbReference>
<dbReference type="GO" id="GO:0022625">
    <property type="term" value="C:cytosolic large ribosomal subunit"/>
    <property type="evidence" value="ECO:0007669"/>
    <property type="project" value="TreeGrafter"/>
</dbReference>
<dbReference type="GO" id="GO:0019843">
    <property type="term" value="F:rRNA binding"/>
    <property type="evidence" value="ECO:0007669"/>
    <property type="project" value="UniProtKB-UniRule"/>
</dbReference>
<dbReference type="GO" id="GO:0003735">
    <property type="term" value="F:structural constituent of ribosome"/>
    <property type="evidence" value="ECO:0007669"/>
    <property type="project" value="InterPro"/>
</dbReference>
<dbReference type="GO" id="GO:0006412">
    <property type="term" value="P:translation"/>
    <property type="evidence" value="ECO:0007669"/>
    <property type="project" value="UniProtKB-UniRule"/>
</dbReference>
<dbReference type="CDD" id="cd00336">
    <property type="entry name" value="Ribosomal_L22"/>
    <property type="match status" value="1"/>
</dbReference>
<dbReference type="Gene3D" id="3.90.470.10">
    <property type="entry name" value="Ribosomal protein L22/L17"/>
    <property type="match status" value="1"/>
</dbReference>
<dbReference type="HAMAP" id="MF_01331_B">
    <property type="entry name" value="Ribosomal_uL22_B"/>
    <property type="match status" value="1"/>
</dbReference>
<dbReference type="InterPro" id="IPR001063">
    <property type="entry name" value="Ribosomal_uL22"/>
</dbReference>
<dbReference type="InterPro" id="IPR005727">
    <property type="entry name" value="Ribosomal_uL22_bac/chlpt-type"/>
</dbReference>
<dbReference type="InterPro" id="IPR047867">
    <property type="entry name" value="Ribosomal_uL22_bac/org-type"/>
</dbReference>
<dbReference type="InterPro" id="IPR036394">
    <property type="entry name" value="Ribosomal_uL22_sf"/>
</dbReference>
<dbReference type="NCBIfam" id="TIGR01044">
    <property type="entry name" value="rplV_bact"/>
    <property type="match status" value="1"/>
</dbReference>
<dbReference type="PANTHER" id="PTHR13501">
    <property type="entry name" value="CHLOROPLAST 50S RIBOSOMAL PROTEIN L22-RELATED"/>
    <property type="match status" value="1"/>
</dbReference>
<dbReference type="PANTHER" id="PTHR13501:SF8">
    <property type="entry name" value="LARGE RIBOSOMAL SUBUNIT PROTEIN UL22M"/>
    <property type="match status" value="1"/>
</dbReference>
<dbReference type="Pfam" id="PF00237">
    <property type="entry name" value="Ribosomal_L22"/>
    <property type="match status" value="1"/>
</dbReference>
<dbReference type="SUPFAM" id="SSF54843">
    <property type="entry name" value="Ribosomal protein L22"/>
    <property type="match status" value="1"/>
</dbReference>
<organism>
    <name type="scientific">Finegoldia magna (strain ATCC 29328 / DSM 20472 / WAL 2508)</name>
    <name type="common">Peptostreptococcus magnus</name>
    <dbReference type="NCBI Taxonomy" id="334413"/>
    <lineage>
        <taxon>Bacteria</taxon>
        <taxon>Bacillati</taxon>
        <taxon>Bacillota</taxon>
        <taxon>Tissierellia</taxon>
        <taxon>Tissierellales</taxon>
        <taxon>Peptoniphilaceae</taxon>
        <taxon>Finegoldia</taxon>
    </lineage>
</organism>
<accession>B0RZU5</accession>
<reference key="1">
    <citation type="journal article" date="2008" name="DNA Res.">
        <title>Complete genome sequence of Finegoldia magna, an anaerobic opportunistic pathogen.</title>
        <authorList>
            <person name="Goto T."/>
            <person name="Yamashita A."/>
            <person name="Hirakawa H."/>
            <person name="Matsutani M."/>
            <person name="Todo K."/>
            <person name="Ohshima K."/>
            <person name="Toh H."/>
            <person name="Miyamoto K."/>
            <person name="Kuhara S."/>
            <person name="Hattori M."/>
            <person name="Shimizu T."/>
            <person name="Akimoto S."/>
        </authorList>
    </citation>
    <scope>NUCLEOTIDE SEQUENCE [LARGE SCALE GENOMIC DNA]</scope>
    <source>
        <strain>ATCC 29328 / DSM 20472 / WAL 2508</strain>
    </source>
</reference>